<keyword id="KW-0067">ATP-binding</keyword>
<keyword id="KW-0963">Cytoplasm</keyword>
<keyword id="KW-0436">Ligase</keyword>
<keyword id="KW-0547">Nucleotide-binding</keyword>
<keyword id="KW-1185">Reference proteome</keyword>
<keyword id="KW-0694">RNA-binding</keyword>
<keyword id="KW-0819">tRNA processing</keyword>
<keyword id="KW-0820">tRNA-binding</keyword>
<dbReference type="EC" id="6.3.4.-" evidence="1"/>
<dbReference type="EMBL" id="AL445564">
    <property type="protein sequence ID" value="CAC13482.1"/>
    <property type="molecule type" value="Genomic_DNA"/>
</dbReference>
<dbReference type="PIR" id="E90550">
    <property type="entry name" value="E90550"/>
</dbReference>
<dbReference type="RefSeq" id="WP_010925113.1">
    <property type="nucleotide sequence ID" value="NC_002771.1"/>
</dbReference>
<dbReference type="SMR" id="Q98QQ2"/>
<dbReference type="STRING" id="272635.gene:17576900"/>
<dbReference type="KEGG" id="mpu:MYPU_3090"/>
<dbReference type="eggNOG" id="COG1323">
    <property type="taxonomic scope" value="Bacteria"/>
</dbReference>
<dbReference type="HOGENOM" id="CLU_038915_1_0_14"/>
<dbReference type="BioCyc" id="MPUL272635:G1GT6-310-MONOMER"/>
<dbReference type="Proteomes" id="UP000000528">
    <property type="component" value="Chromosome"/>
</dbReference>
<dbReference type="GO" id="GO:0005737">
    <property type="term" value="C:cytoplasm"/>
    <property type="evidence" value="ECO:0007669"/>
    <property type="project" value="UniProtKB-SubCell"/>
</dbReference>
<dbReference type="GO" id="GO:0005524">
    <property type="term" value="F:ATP binding"/>
    <property type="evidence" value="ECO:0007669"/>
    <property type="project" value="UniProtKB-KW"/>
</dbReference>
<dbReference type="GO" id="GO:0016879">
    <property type="term" value="F:ligase activity, forming carbon-nitrogen bonds"/>
    <property type="evidence" value="ECO:0007669"/>
    <property type="project" value="UniProtKB-UniRule"/>
</dbReference>
<dbReference type="GO" id="GO:0000049">
    <property type="term" value="F:tRNA binding"/>
    <property type="evidence" value="ECO:0007669"/>
    <property type="project" value="UniProtKB-KW"/>
</dbReference>
<dbReference type="GO" id="GO:0006400">
    <property type="term" value="P:tRNA modification"/>
    <property type="evidence" value="ECO:0007669"/>
    <property type="project" value="UniProtKB-UniRule"/>
</dbReference>
<dbReference type="Gene3D" id="3.40.50.620">
    <property type="entry name" value="HUPs"/>
    <property type="match status" value="1"/>
</dbReference>
<dbReference type="HAMAP" id="MF_01539">
    <property type="entry name" value="TmcAL"/>
    <property type="match status" value="1"/>
</dbReference>
<dbReference type="InterPro" id="IPR014729">
    <property type="entry name" value="Rossmann-like_a/b/a_fold"/>
</dbReference>
<dbReference type="InterPro" id="IPR008513">
    <property type="entry name" value="tRNA(Met)_cyd_acetate_ligase"/>
</dbReference>
<dbReference type="NCBIfam" id="NF010192">
    <property type="entry name" value="PRK13671.1"/>
    <property type="match status" value="1"/>
</dbReference>
<dbReference type="PANTHER" id="PTHR37825">
    <property type="entry name" value="TRNA(MET) CYTIDINE ACETATE LIGASE"/>
    <property type="match status" value="1"/>
</dbReference>
<dbReference type="PANTHER" id="PTHR37825:SF1">
    <property type="entry name" value="TRNA(MET) CYTIDINE ACETATE LIGASE"/>
    <property type="match status" value="1"/>
</dbReference>
<dbReference type="Pfam" id="PF05636">
    <property type="entry name" value="HIGH_NTase1"/>
    <property type="match status" value="1"/>
</dbReference>
<dbReference type="SUPFAM" id="SSF52374">
    <property type="entry name" value="Nucleotidylyl transferase"/>
    <property type="match status" value="1"/>
</dbReference>
<protein>
    <recommendedName>
        <fullName evidence="1">tRNA(Met) cytidine acetate ligase</fullName>
        <ecNumber evidence="1">6.3.4.-</ecNumber>
    </recommendedName>
</protein>
<feature type="chain" id="PRO_0000147176" description="tRNA(Met) cytidine acetate ligase">
    <location>
        <begin position="1"/>
        <end position="298"/>
    </location>
</feature>
<feature type="binding site" evidence="1">
    <location>
        <begin position="6"/>
        <end position="19"/>
    </location>
    <ligand>
        <name>ATP</name>
        <dbReference type="ChEBI" id="CHEBI:30616"/>
    </ligand>
</feature>
<feature type="binding site" evidence="1">
    <location>
        <position position="100"/>
    </location>
    <ligand>
        <name>ATP</name>
        <dbReference type="ChEBI" id="CHEBI:30616"/>
    </ligand>
</feature>
<feature type="binding site" evidence="1">
    <location>
        <position position="157"/>
    </location>
    <ligand>
        <name>ATP</name>
        <dbReference type="ChEBI" id="CHEBI:30616"/>
    </ligand>
</feature>
<feature type="binding site" evidence="1">
    <location>
        <position position="182"/>
    </location>
    <ligand>
        <name>ATP</name>
        <dbReference type="ChEBI" id="CHEBI:30616"/>
    </ligand>
</feature>
<proteinExistence type="inferred from homology"/>
<sequence length="298" mass="34573">MAIAIIAEYNPFHNGHIYQINYVKEKFPGEKIHIILSGNYVQRGEIAIASFEKRKKIALEYGADYVHELEFEYASQAAHIFAKGALAKINSLQIDKLIFGSETNDINEFINIAKIIKDNKSQYQLFLKENLKKGLSFPKASSLASQKITGKYFQMPNDILGFEYVKQIIFNNYKITAFCHTRTNDYKSDKPSGKYASSTLIRKMIFEGKDVSKYTPMIFEKKPIRIEDLYFDFQTIIFNKTAQELRQFKLVSEGIENLFKKHINEKSYDDFVAKVNSKRYTSSRIKRIILYILLGIKN</sequence>
<accession>Q98QQ2</accession>
<comment type="function">
    <text evidence="1">Catalyzes the formation of N(4)-acetylcytidine (ac(4)C) at the wobble position of elongator tRNA(Met), using acetate and ATP as substrates. First activates an acetate ion to form acetyladenylate (Ac-AMP) and then transfers the acetyl group to tRNA to form ac(4)C34.</text>
</comment>
<comment type="catalytic activity">
    <reaction evidence="1">
        <text>cytidine(34) in elongator tRNA(Met) + acetate + ATP = N(4)-acetylcytidine(34) in elongator tRNA(Met) + AMP + diphosphate</text>
        <dbReference type="Rhea" id="RHEA:58144"/>
        <dbReference type="Rhea" id="RHEA-COMP:10693"/>
        <dbReference type="Rhea" id="RHEA-COMP:10694"/>
        <dbReference type="ChEBI" id="CHEBI:30089"/>
        <dbReference type="ChEBI" id="CHEBI:30616"/>
        <dbReference type="ChEBI" id="CHEBI:33019"/>
        <dbReference type="ChEBI" id="CHEBI:74900"/>
        <dbReference type="ChEBI" id="CHEBI:82748"/>
        <dbReference type="ChEBI" id="CHEBI:456215"/>
    </reaction>
</comment>
<comment type="subcellular location">
    <subcellularLocation>
        <location evidence="1">Cytoplasm</location>
    </subcellularLocation>
</comment>
<comment type="similarity">
    <text evidence="1">Belongs to the TmcAL family.</text>
</comment>
<name>TMCAL_MYCPU</name>
<organism>
    <name type="scientific">Mycoplasmopsis pulmonis (strain UAB CTIP)</name>
    <name type="common">Mycoplasma pulmonis</name>
    <dbReference type="NCBI Taxonomy" id="272635"/>
    <lineage>
        <taxon>Bacteria</taxon>
        <taxon>Bacillati</taxon>
        <taxon>Mycoplasmatota</taxon>
        <taxon>Mycoplasmoidales</taxon>
        <taxon>Metamycoplasmataceae</taxon>
        <taxon>Mycoplasmopsis</taxon>
    </lineage>
</organism>
<reference key="1">
    <citation type="journal article" date="2001" name="Nucleic Acids Res.">
        <title>The complete genome sequence of the murine respiratory pathogen Mycoplasma pulmonis.</title>
        <authorList>
            <person name="Chambaud I."/>
            <person name="Heilig R."/>
            <person name="Ferris S."/>
            <person name="Barbe V."/>
            <person name="Samson D."/>
            <person name="Galisson F."/>
            <person name="Moszer I."/>
            <person name="Dybvig K."/>
            <person name="Wroblewski H."/>
            <person name="Viari A."/>
            <person name="Rocha E.P.C."/>
            <person name="Blanchard A."/>
        </authorList>
    </citation>
    <scope>NUCLEOTIDE SEQUENCE [LARGE SCALE GENOMIC DNA]</scope>
    <source>
        <strain>UAB CTIP</strain>
    </source>
</reference>
<evidence type="ECO:0000255" key="1">
    <source>
        <dbReference type="HAMAP-Rule" id="MF_01539"/>
    </source>
</evidence>
<gene>
    <name evidence="1" type="primary">tmcAL</name>
    <name type="ordered locus">MYPU_3090</name>
</gene>